<gene>
    <name evidence="1" type="primary">aroB</name>
    <name type="ordered locus">SPP_1395</name>
</gene>
<evidence type="ECO:0000255" key="1">
    <source>
        <dbReference type="HAMAP-Rule" id="MF_00110"/>
    </source>
</evidence>
<comment type="function">
    <text evidence="1">Catalyzes the conversion of 3-deoxy-D-arabino-heptulosonate 7-phosphate (DAHP) to dehydroquinate (DHQ).</text>
</comment>
<comment type="catalytic activity">
    <reaction evidence="1">
        <text>7-phospho-2-dehydro-3-deoxy-D-arabino-heptonate = 3-dehydroquinate + phosphate</text>
        <dbReference type="Rhea" id="RHEA:21968"/>
        <dbReference type="ChEBI" id="CHEBI:32364"/>
        <dbReference type="ChEBI" id="CHEBI:43474"/>
        <dbReference type="ChEBI" id="CHEBI:58394"/>
        <dbReference type="EC" id="4.2.3.4"/>
    </reaction>
</comment>
<comment type="cofactor">
    <cofactor evidence="1">
        <name>Co(2+)</name>
        <dbReference type="ChEBI" id="CHEBI:48828"/>
    </cofactor>
    <cofactor evidence="1">
        <name>Zn(2+)</name>
        <dbReference type="ChEBI" id="CHEBI:29105"/>
    </cofactor>
    <text evidence="1">Binds 1 divalent metal cation per subunit. Can use either Co(2+) or Zn(2+).</text>
</comment>
<comment type="cofactor">
    <cofactor evidence="1">
        <name>NAD(+)</name>
        <dbReference type="ChEBI" id="CHEBI:57540"/>
    </cofactor>
</comment>
<comment type="pathway">
    <text evidence="1">Metabolic intermediate biosynthesis; chorismate biosynthesis; chorismate from D-erythrose 4-phosphate and phosphoenolpyruvate: step 2/7.</text>
</comment>
<comment type="subcellular location">
    <subcellularLocation>
        <location evidence="1">Cytoplasm</location>
    </subcellularLocation>
</comment>
<comment type="similarity">
    <text evidence="1">Belongs to the sugar phosphate cyclases superfamily. Dehydroquinate synthase family.</text>
</comment>
<sequence>MKIRIDIPHHPYDIQIEKGCMAQAGQWLRELWQPQKVVIVTDNHVASLYAEKVKLSLEDAGFQVAVFDFLEGEERKNLTTVQKVYEFLVKQGLTRSDGIVALGGGVVGDLAGFVASTYMRGIHFVQIPTSLTAQVDSSIGGKTGVNTPFAKNMVGTFAQPDGVLIDPLVLETLGKRELIEGMGEVIKYGLIEDPELWALLTGLNGSVESILEHAETLIEHSCQVKRKMVVEDELDNGIRLYLNFGHTIGHAIEATAGYGKVMHGEAVAMGMVQISKVAEEKGLMPAGITQSITEMCQKFGLPVDYENWEVDKLYQALTHDKKARGNTLKLVLVPELGSAIIHPVSLEEMKDYLVK</sequence>
<keyword id="KW-0028">Amino-acid biosynthesis</keyword>
<keyword id="KW-0057">Aromatic amino acid biosynthesis</keyword>
<keyword id="KW-0170">Cobalt</keyword>
<keyword id="KW-0963">Cytoplasm</keyword>
<keyword id="KW-0456">Lyase</keyword>
<keyword id="KW-0479">Metal-binding</keyword>
<keyword id="KW-0520">NAD</keyword>
<keyword id="KW-0547">Nucleotide-binding</keyword>
<keyword id="KW-0862">Zinc</keyword>
<dbReference type="EC" id="4.2.3.4" evidence="1"/>
<dbReference type="EMBL" id="CP000920">
    <property type="protein sequence ID" value="ACO21118.1"/>
    <property type="molecule type" value="Genomic_DNA"/>
</dbReference>
<dbReference type="RefSeq" id="WP_000702169.1">
    <property type="nucleotide sequence ID" value="NC_012467.1"/>
</dbReference>
<dbReference type="SMR" id="C1CL84"/>
<dbReference type="GeneID" id="45653365"/>
<dbReference type="KEGG" id="spp:SPP_1395"/>
<dbReference type="HOGENOM" id="CLU_001201_0_2_9"/>
<dbReference type="UniPathway" id="UPA00053">
    <property type="reaction ID" value="UER00085"/>
</dbReference>
<dbReference type="GO" id="GO:0005737">
    <property type="term" value="C:cytoplasm"/>
    <property type="evidence" value="ECO:0007669"/>
    <property type="project" value="UniProtKB-SubCell"/>
</dbReference>
<dbReference type="GO" id="GO:0003856">
    <property type="term" value="F:3-dehydroquinate synthase activity"/>
    <property type="evidence" value="ECO:0007669"/>
    <property type="project" value="UniProtKB-UniRule"/>
</dbReference>
<dbReference type="GO" id="GO:0046872">
    <property type="term" value="F:metal ion binding"/>
    <property type="evidence" value="ECO:0007669"/>
    <property type="project" value="UniProtKB-KW"/>
</dbReference>
<dbReference type="GO" id="GO:0000166">
    <property type="term" value="F:nucleotide binding"/>
    <property type="evidence" value="ECO:0007669"/>
    <property type="project" value="UniProtKB-KW"/>
</dbReference>
<dbReference type="GO" id="GO:0008652">
    <property type="term" value="P:amino acid biosynthetic process"/>
    <property type="evidence" value="ECO:0007669"/>
    <property type="project" value="UniProtKB-KW"/>
</dbReference>
<dbReference type="GO" id="GO:0009073">
    <property type="term" value="P:aromatic amino acid family biosynthetic process"/>
    <property type="evidence" value="ECO:0007669"/>
    <property type="project" value="UniProtKB-KW"/>
</dbReference>
<dbReference type="GO" id="GO:0009423">
    <property type="term" value="P:chorismate biosynthetic process"/>
    <property type="evidence" value="ECO:0007669"/>
    <property type="project" value="UniProtKB-UniRule"/>
</dbReference>
<dbReference type="CDD" id="cd08195">
    <property type="entry name" value="DHQS"/>
    <property type="match status" value="1"/>
</dbReference>
<dbReference type="FunFam" id="1.20.1090.10:FF:000012">
    <property type="entry name" value="3-dehydroquinate synthase"/>
    <property type="match status" value="1"/>
</dbReference>
<dbReference type="FunFam" id="3.40.50.1970:FF:000001">
    <property type="entry name" value="3-dehydroquinate synthase"/>
    <property type="match status" value="1"/>
</dbReference>
<dbReference type="Gene3D" id="3.40.50.1970">
    <property type="match status" value="1"/>
</dbReference>
<dbReference type="Gene3D" id="1.20.1090.10">
    <property type="entry name" value="Dehydroquinate synthase-like - alpha domain"/>
    <property type="match status" value="1"/>
</dbReference>
<dbReference type="HAMAP" id="MF_00110">
    <property type="entry name" value="DHQ_synthase"/>
    <property type="match status" value="1"/>
</dbReference>
<dbReference type="InterPro" id="IPR050071">
    <property type="entry name" value="Dehydroquinate_synthase"/>
</dbReference>
<dbReference type="InterPro" id="IPR016037">
    <property type="entry name" value="DHQ_synth_AroB"/>
</dbReference>
<dbReference type="InterPro" id="IPR030963">
    <property type="entry name" value="DHQ_synth_fam"/>
</dbReference>
<dbReference type="InterPro" id="IPR030960">
    <property type="entry name" value="DHQS/DOIS_N"/>
</dbReference>
<dbReference type="InterPro" id="IPR056179">
    <property type="entry name" value="DHQS_C"/>
</dbReference>
<dbReference type="NCBIfam" id="TIGR01357">
    <property type="entry name" value="aroB"/>
    <property type="match status" value="1"/>
</dbReference>
<dbReference type="PANTHER" id="PTHR43622">
    <property type="entry name" value="3-DEHYDROQUINATE SYNTHASE"/>
    <property type="match status" value="1"/>
</dbReference>
<dbReference type="PANTHER" id="PTHR43622:SF7">
    <property type="entry name" value="3-DEHYDROQUINATE SYNTHASE, CHLOROPLASTIC"/>
    <property type="match status" value="1"/>
</dbReference>
<dbReference type="Pfam" id="PF01761">
    <property type="entry name" value="DHQ_synthase"/>
    <property type="match status" value="1"/>
</dbReference>
<dbReference type="Pfam" id="PF24621">
    <property type="entry name" value="DHQS_C"/>
    <property type="match status" value="1"/>
</dbReference>
<dbReference type="PIRSF" id="PIRSF001455">
    <property type="entry name" value="DHQ_synth"/>
    <property type="match status" value="1"/>
</dbReference>
<dbReference type="SUPFAM" id="SSF56796">
    <property type="entry name" value="Dehydroquinate synthase-like"/>
    <property type="match status" value="1"/>
</dbReference>
<name>AROB_STRZP</name>
<reference key="1">
    <citation type="journal article" date="2010" name="Genome Biol.">
        <title>Structure and dynamics of the pan-genome of Streptococcus pneumoniae and closely related species.</title>
        <authorList>
            <person name="Donati C."/>
            <person name="Hiller N.L."/>
            <person name="Tettelin H."/>
            <person name="Muzzi A."/>
            <person name="Croucher N.J."/>
            <person name="Angiuoli S.V."/>
            <person name="Oggioni M."/>
            <person name="Dunning Hotopp J.C."/>
            <person name="Hu F.Z."/>
            <person name="Riley D.R."/>
            <person name="Covacci A."/>
            <person name="Mitchell T.J."/>
            <person name="Bentley S.D."/>
            <person name="Kilian M."/>
            <person name="Ehrlich G.D."/>
            <person name="Rappuoli R."/>
            <person name="Moxon E.R."/>
            <person name="Masignani V."/>
        </authorList>
    </citation>
    <scope>NUCLEOTIDE SEQUENCE [LARGE SCALE GENOMIC DNA]</scope>
    <source>
        <strain>P1031</strain>
    </source>
</reference>
<proteinExistence type="inferred from homology"/>
<feature type="chain" id="PRO_1000119096" description="3-dehydroquinate synthase">
    <location>
        <begin position="1"/>
        <end position="355"/>
    </location>
</feature>
<feature type="binding site" evidence="1">
    <location>
        <begin position="71"/>
        <end position="76"/>
    </location>
    <ligand>
        <name>NAD(+)</name>
        <dbReference type="ChEBI" id="CHEBI:57540"/>
    </ligand>
</feature>
<feature type="binding site" evidence="1">
    <location>
        <begin position="105"/>
        <end position="109"/>
    </location>
    <ligand>
        <name>NAD(+)</name>
        <dbReference type="ChEBI" id="CHEBI:57540"/>
    </ligand>
</feature>
<feature type="binding site" evidence="1">
    <location>
        <begin position="129"/>
        <end position="130"/>
    </location>
    <ligand>
        <name>NAD(+)</name>
        <dbReference type="ChEBI" id="CHEBI:57540"/>
    </ligand>
</feature>
<feature type="binding site" evidence="1">
    <location>
        <position position="142"/>
    </location>
    <ligand>
        <name>NAD(+)</name>
        <dbReference type="ChEBI" id="CHEBI:57540"/>
    </ligand>
</feature>
<feature type="binding site" evidence="1">
    <location>
        <position position="151"/>
    </location>
    <ligand>
        <name>NAD(+)</name>
        <dbReference type="ChEBI" id="CHEBI:57540"/>
    </ligand>
</feature>
<feature type="binding site" evidence="1">
    <location>
        <position position="184"/>
    </location>
    <ligand>
        <name>Zn(2+)</name>
        <dbReference type="ChEBI" id="CHEBI:29105"/>
    </ligand>
</feature>
<feature type="binding site" evidence="1">
    <location>
        <position position="246"/>
    </location>
    <ligand>
        <name>Zn(2+)</name>
        <dbReference type="ChEBI" id="CHEBI:29105"/>
    </ligand>
</feature>
<feature type="binding site" evidence="1">
    <location>
        <position position="263"/>
    </location>
    <ligand>
        <name>Zn(2+)</name>
        <dbReference type="ChEBI" id="CHEBI:29105"/>
    </ligand>
</feature>
<organism>
    <name type="scientific">Streptococcus pneumoniae (strain P1031)</name>
    <dbReference type="NCBI Taxonomy" id="488223"/>
    <lineage>
        <taxon>Bacteria</taxon>
        <taxon>Bacillati</taxon>
        <taxon>Bacillota</taxon>
        <taxon>Bacilli</taxon>
        <taxon>Lactobacillales</taxon>
        <taxon>Streptococcaceae</taxon>
        <taxon>Streptococcus</taxon>
    </lineage>
</organism>
<accession>C1CL84</accession>
<protein>
    <recommendedName>
        <fullName evidence="1">3-dehydroquinate synthase</fullName>
        <shortName evidence="1">DHQS</shortName>
        <ecNumber evidence="1">4.2.3.4</ecNumber>
    </recommendedName>
</protein>